<protein>
    <recommendedName>
        <fullName evidence="1">RNA pyrophosphohydrolase</fullName>
        <ecNumber evidence="1">3.6.1.-</ecNumber>
    </recommendedName>
    <alternativeName>
        <fullName evidence="1">(Di)nucleoside polyphosphate hydrolase</fullName>
    </alternativeName>
</protein>
<dbReference type="EC" id="3.6.1.-" evidence="1"/>
<dbReference type="EMBL" id="CP000708">
    <property type="protein sequence ID" value="ABQ61208.1"/>
    <property type="molecule type" value="Genomic_DNA"/>
</dbReference>
<dbReference type="RefSeq" id="WP_004688740.1">
    <property type="nucleotide sequence ID" value="NC_009505.1"/>
</dbReference>
<dbReference type="SMR" id="A5VSH6"/>
<dbReference type="KEGG" id="bov:BOV_1769"/>
<dbReference type="HOGENOM" id="CLU_087195_3_0_5"/>
<dbReference type="PhylomeDB" id="A5VSH6"/>
<dbReference type="Proteomes" id="UP000006383">
    <property type="component" value="Chromosome I"/>
</dbReference>
<dbReference type="GO" id="GO:0034432">
    <property type="term" value="F:bis(5'-adenosyl)-pentaphosphatase activity"/>
    <property type="evidence" value="ECO:0007669"/>
    <property type="project" value="TreeGrafter"/>
</dbReference>
<dbReference type="GO" id="GO:0008893">
    <property type="term" value="F:guanosine-3',5'-bis(diphosphate) 3'-diphosphatase activity"/>
    <property type="evidence" value="ECO:0007669"/>
    <property type="project" value="TreeGrafter"/>
</dbReference>
<dbReference type="GO" id="GO:0006753">
    <property type="term" value="P:nucleoside phosphate metabolic process"/>
    <property type="evidence" value="ECO:0007669"/>
    <property type="project" value="TreeGrafter"/>
</dbReference>
<dbReference type="GO" id="GO:0019693">
    <property type="term" value="P:ribose phosphate metabolic process"/>
    <property type="evidence" value="ECO:0007669"/>
    <property type="project" value="TreeGrafter"/>
</dbReference>
<dbReference type="CDD" id="cd03671">
    <property type="entry name" value="NUDIX_Ap4A_hydrolase_plant_like"/>
    <property type="match status" value="1"/>
</dbReference>
<dbReference type="Gene3D" id="3.90.79.10">
    <property type="entry name" value="Nucleoside Triphosphate Pyrophosphohydrolase"/>
    <property type="match status" value="1"/>
</dbReference>
<dbReference type="HAMAP" id="MF_00298">
    <property type="entry name" value="Nudix_RppH"/>
    <property type="match status" value="1"/>
</dbReference>
<dbReference type="InterPro" id="IPR020476">
    <property type="entry name" value="Nudix_hydrolase"/>
</dbReference>
<dbReference type="InterPro" id="IPR015797">
    <property type="entry name" value="NUDIX_hydrolase-like_dom_sf"/>
</dbReference>
<dbReference type="InterPro" id="IPR020084">
    <property type="entry name" value="NUDIX_hydrolase_CS"/>
</dbReference>
<dbReference type="InterPro" id="IPR000086">
    <property type="entry name" value="NUDIX_hydrolase_dom"/>
</dbReference>
<dbReference type="InterPro" id="IPR022927">
    <property type="entry name" value="RppH"/>
</dbReference>
<dbReference type="NCBIfam" id="NF001938">
    <property type="entry name" value="PRK00714.1-5"/>
    <property type="match status" value="1"/>
</dbReference>
<dbReference type="PANTHER" id="PTHR11839:SF22">
    <property type="entry name" value="NUDIX HYDROLASE 26, CHLOROPLASTIC"/>
    <property type="match status" value="1"/>
</dbReference>
<dbReference type="PANTHER" id="PTHR11839">
    <property type="entry name" value="UDP/ADP-SUGAR PYROPHOSPHATASE"/>
    <property type="match status" value="1"/>
</dbReference>
<dbReference type="Pfam" id="PF00293">
    <property type="entry name" value="NUDIX"/>
    <property type="match status" value="1"/>
</dbReference>
<dbReference type="PRINTS" id="PR00502">
    <property type="entry name" value="NUDIXFAMILY"/>
</dbReference>
<dbReference type="SUPFAM" id="SSF55811">
    <property type="entry name" value="Nudix"/>
    <property type="match status" value="1"/>
</dbReference>
<dbReference type="PROSITE" id="PS51462">
    <property type="entry name" value="NUDIX"/>
    <property type="match status" value="1"/>
</dbReference>
<dbReference type="PROSITE" id="PS00893">
    <property type="entry name" value="NUDIX_BOX"/>
    <property type="match status" value="1"/>
</dbReference>
<reference key="1">
    <citation type="journal article" date="2009" name="PLoS ONE">
        <title>Genome degradation in Brucella ovis corresponds with narrowing of its host range and tissue tropism.</title>
        <authorList>
            <person name="Tsolis R.M."/>
            <person name="Seshadri R."/>
            <person name="Santos R.L."/>
            <person name="Sangari F.J."/>
            <person name="Lobo J.M."/>
            <person name="de Jong M.F."/>
            <person name="Ren Q."/>
            <person name="Myers G."/>
            <person name="Brinkac L.M."/>
            <person name="Nelson W.C."/>
            <person name="Deboy R.T."/>
            <person name="Angiuoli S."/>
            <person name="Khouri H."/>
            <person name="Dimitrov G."/>
            <person name="Robinson J.R."/>
            <person name="Mulligan S."/>
            <person name="Walker R.L."/>
            <person name="Elzer P.E."/>
            <person name="Hassan K.A."/>
            <person name="Paulsen I.T."/>
        </authorList>
    </citation>
    <scope>NUCLEOTIDE SEQUENCE [LARGE SCALE GENOMIC DNA]</scope>
    <source>
        <strain>ATCC 25840 / 63/290 / NCTC 10512</strain>
    </source>
</reference>
<gene>
    <name evidence="1" type="primary">rppH</name>
    <name evidence="1" type="synonym">nudH</name>
    <name type="ordered locus">BOV_1769</name>
</gene>
<name>RPPH_BRUO2</name>
<keyword id="KW-0378">Hydrolase</keyword>
<proteinExistence type="inferred from homology"/>
<feature type="chain" id="PRO_1000078954" description="RNA pyrophosphohydrolase">
    <location>
        <begin position="1"/>
        <end position="178"/>
    </location>
</feature>
<feature type="domain" description="Nudix hydrolase" evidence="1">
    <location>
        <begin position="18"/>
        <end position="171"/>
    </location>
</feature>
<feature type="short sequence motif" description="Nudix box">
    <location>
        <begin position="59"/>
        <end position="80"/>
    </location>
</feature>
<accession>A5VSH6</accession>
<comment type="function">
    <text evidence="1">Accelerates the degradation of transcripts by removing pyrophosphate from the 5'-end of triphosphorylated RNA, leading to a more labile monophosphorylated state that can stimulate subsequent ribonuclease cleavage.</text>
</comment>
<comment type="cofactor">
    <cofactor evidence="1">
        <name>a divalent metal cation</name>
        <dbReference type="ChEBI" id="CHEBI:60240"/>
    </cofactor>
</comment>
<comment type="similarity">
    <text evidence="1">Belongs to the Nudix hydrolase family. RppH subfamily.</text>
</comment>
<evidence type="ECO:0000255" key="1">
    <source>
        <dbReference type="HAMAP-Rule" id="MF_00298"/>
    </source>
</evidence>
<organism>
    <name type="scientific">Brucella ovis (strain ATCC 25840 / 63/290 / NCTC 10512)</name>
    <dbReference type="NCBI Taxonomy" id="444178"/>
    <lineage>
        <taxon>Bacteria</taxon>
        <taxon>Pseudomonadati</taxon>
        <taxon>Pseudomonadota</taxon>
        <taxon>Alphaproteobacteria</taxon>
        <taxon>Hyphomicrobiales</taxon>
        <taxon>Brucellaceae</taxon>
        <taxon>Brucella/Ochrobactrum group</taxon>
        <taxon>Brucella</taxon>
    </lineage>
</organism>
<sequence length="178" mass="19854">MSKHKGPTGAMVDPESLPYRPCVGLMVLNKAGLVWAGRRIVIPGDEMDGATQLWQMPQGGIDKGEDPAQAALRELYEETGMTSVSLLEEASDWINYDLPPHLVGLALKGKYRGQTQKWFAYRFEGDESEIAINPPPGGHTAEFDCWEWKPMADLPNLIVPFKRKVYEQVVATFRHLAA</sequence>